<evidence type="ECO:0000255" key="1">
    <source>
        <dbReference type="HAMAP-Rule" id="MF_01218"/>
    </source>
</evidence>
<sequence>MKIVEVKHPLVKHKLGLMREHDISTKRFRELASEVGSLLTYEATSDLATEKVTIEGWNGPVQVEQIKGKKITVVPILRAGLGMMEGVLEHVPSARISVVGIYRNEETLEPVPYFQKLVSNIDERMALVVDPMLATGGSMIATIDLLKNAGCNSIKVLVLVAAPEGIAALEKAHPDVELYTASIDQGLNEHGYIIPGLGDAGDKIFGTK</sequence>
<protein>
    <recommendedName>
        <fullName evidence="1">Uracil phosphoribosyltransferase</fullName>
        <ecNumber evidence="1">2.4.2.9</ecNumber>
    </recommendedName>
    <alternativeName>
        <fullName evidence="1">UMP pyrophosphorylase</fullName>
    </alternativeName>
    <alternativeName>
        <fullName evidence="1">UPRTase</fullName>
    </alternativeName>
</protein>
<dbReference type="EC" id="2.4.2.9" evidence="1"/>
<dbReference type="EMBL" id="CP000653">
    <property type="protein sequence ID" value="ABP61650.1"/>
    <property type="molecule type" value="Genomic_DNA"/>
</dbReference>
<dbReference type="RefSeq" id="WP_015959982.1">
    <property type="nucleotide sequence ID" value="NC_009436.1"/>
</dbReference>
<dbReference type="SMR" id="A4WD70"/>
<dbReference type="STRING" id="399742.Ent638_2986"/>
<dbReference type="GeneID" id="93305931"/>
<dbReference type="KEGG" id="ent:Ent638_2986"/>
<dbReference type="eggNOG" id="COG0035">
    <property type="taxonomic scope" value="Bacteria"/>
</dbReference>
<dbReference type="HOGENOM" id="CLU_067096_2_2_6"/>
<dbReference type="OrthoDB" id="9781675at2"/>
<dbReference type="UniPathway" id="UPA00574">
    <property type="reaction ID" value="UER00636"/>
</dbReference>
<dbReference type="Proteomes" id="UP000000230">
    <property type="component" value="Chromosome"/>
</dbReference>
<dbReference type="GO" id="GO:0005525">
    <property type="term" value="F:GTP binding"/>
    <property type="evidence" value="ECO:0007669"/>
    <property type="project" value="UniProtKB-KW"/>
</dbReference>
<dbReference type="GO" id="GO:0000287">
    <property type="term" value="F:magnesium ion binding"/>
    <property type="evidence" value="ECO:0007669"/>
    <property type="project" value="UniProtKB-UniRule"/>
</dbReference>
<dbReference type="GO" id="GO:0004845">
    <property type="term" value="F:uracil phosphoribosyltransferase activity"/>
    <property type="evidence" value="ECO:0007669"/>
    <property type="project" value="UniProtKB-UniRule"/>
</dbReference>
<dbReference type="GO" id="GO:0044206">
    <property type="term" value="P:UMP salvage"/>
    <property type="evidence" value="ECO:0007669"/>
    <property type="project" value="UniProtKB-UniRule"/>
</dbReference>
<dbReference type="GO" id="GO:0006223">
    <property type="term" value="P:uracil salvage"/>
    <property type="evidence" value="ECO:0007669"/>
    <property type="project" value="InterPro"/>
</dbReference>
<dbReference type="CDD" id="cd06223">
    <property type="entry name" value="PRTases_typeI"/>
    <property type="match status" value="1"/>
</dbReference>
<dbReference type="FunFam" id="3.40.50.2020:FF:000003">
    <property type="entry name" value="Uracil phosphoribosyltransferase"/>
    <property type="match status" value="1"/>
</dbReference>
<dbReference type="Gene3D" id="3.40.50.2020">
    <property type="match status" value="1"/>
</dbReference>
<dbReference type="HAMAP" id="MF_01218_B">
    <property type="entry name" value="Upp_B"/>
    <property type="match status" value="1"/>
</dbReference>
<dbReference type="InterPro" id="IPR000836">
    <property type="entry name" value="PRibTrfase_dom"/>
</dbReference>
<dbReference type="InterPro" id="IPR029057">
    <property type="entry name" value="PRTase-like"/>
</dbReference>
<dbReference type="InterPro" id="IPR034332">
    <property type="entry name" value="Upp_B"/>
</dbReference>
<dbReference type="InterPro" id="IPR050054">
    <property type="entry name" value="UPRTase/APRTase"/>
</dbReference>
<dbReference type="InterPro" id="IPR005765">
    <property type="entry name" value="Ura_phspho_trans"/>
</dbReference>
<dbReference type="NCBIfam" id="NF001097">
    <property type="entry name" value="PRK00129.1"/>
    <property type="match status" value="1"/>
</dbReference>
<dbReference type="NCBIfam" id="TIGR01091">
    <property type="entry name" value="upp"/>
    <property type="match status" value="1"/>
</dbReference>
<dbReference type="PANTHER" id="PTHR32315">
    <property type="entry name" value="ADENINE PHOSPHORIBOSYLTRANSFERASE"/>
    <property type="match status" value="1"/>
</dbReference>
<dbReference type="PANTHER" id="PTHR32315:SF4">
    <property type="entry name" value="URACIL PHOSPHORIBOSYLTRANSFERASE, CHLOROPLASTIC"/>
    <property type="match status" value="1"/>
</dbReference>
<dbReference type="Pfam" id="PF14681">
    <property type="entry name" value="UPRTase"/>
    <property type="match status" value="1"/>
</dbReference>
<dbReference type="SUPFAM" id="SSF53271">
    <property type="entry name" value="PRTase-like"/>
    <property type="match status" value="1"/>
</dbReference>
<name>UPP_ENT38</name>
<keyword id="KW-0021">Allosteric enzyme</keyword>
<keyword id="KW-0328">Glycosyltransferase</keyword>
<keyword id="KW-0342">GTP-binding</keyword>
<keyword id="KW-0460">Magnesium</keyword>
<keyword id="KW-0547">Nucleotide-binding</keyword>
<keyword id="KW-0808">Transferase</keyword>
<organism>
    <name type="scientific">Enterobacter sp. (strain 638)</name>
    <dbReference type="NCBI Taxonomy" id="399742"/>
    <lineage>
        <taxon>Bacteria</taxon>
        <taxon>Pseudomonadati</taxon>
        <taxon>Pseudomonadota</taxon>
        <taxon>Gammaproteobacteria</taxon>
        <taxon>Enterobacterales</taxon>
        <taxon>Enterobacteriaceae</taxon>
        <taxon>Enterobacter</taxon>
    </lineage>
</organism>
<reference key="1">
    <citation type="journal article" date="2010" name="PLoS Genet.">
        <title>Genome sequence of the plant growth promoting endophytic bacterium Enterobacter sp. 638.</title>
        <authorList>
            <person name="Taghavi S."/>
            <person name="van der Lelie D."/>
            <person name="Hoffman A."/>
            <person name="Zhang Y.B."/>
            <person name="Walla M.D."/>
            <person name="Vangronsveld J."/>
            <person name="Newman L."/>
            <person name="Monchy S."/>
        </authorList>
    </citation>
    <scope>NUCLEOTIDE SEQUENCE [LARGE SCALE GENOMIC DNA]</scope>
    <source>
        <strain>638</strain>
    </source>
</reference>
<accession>A4WD70</accession>
<comment type="function">
    <text evidence="1">Catalyzes the conversion of uracil and 5-phospho-alpha-D-ribose 1-diphosphate (PRPP) to UMP and diphosphate.</text>
</comment>
<comment type="catalytic activity">
    <reaction evidence="1">
        <text>UMP + diphosphate = 5-phospho-alpha-D-ribose 1-diphosphate + uracil</text>
        <dbReference type="Rhea" id="RHEA:13017"/>
        <dbReference type="ChEBI" id="CHEBI:17568"/>
        <dbReference type="ChEBI" id="CHEBI:33019"/>
        <dbReference type="ChEBI" id="CHEBI:57865"/>
        <dbReference type="ChEBI" id="CHEBI:58017"/>
        <dbReference type="EC" id="2.4.2.9"/>
    </reaction>
</comment>
<comment type="cofactor">
    <cofactor evidence="1">
        <name>Mg(2+)</name>
        <dbReference type="ChEBI" id="CHEBI:18420"/>
    </cofactor>
    <text evidence="1">Binds 1 Mg(2+) ion per subunit. The magnesium is bound as Mg-PRPP.</text>
</comment>
<comment type="activity regulation">
    <text evidence="1">Allosterically activated by GTP.</text>
</comment>
<comment type="pathway">
    <text evidence="1">Pyrimidine metabolism; UMP biosynthesis via salvage pathway; UMP from uracil: step 1/1.</text>
</comment>
<comment type="similarity">
    <text evidence="1">Belongs to the UPRTase family.</text>
</comment>
<gene>
    <name evidence="1" type="primary">upp</name>
    <name type="ordered locus">Ent638_2986</name>
</gene>
<proteinExistence type="inferred from homology"/>
<feature type="chain" id="PRO_1000066730" description="Uracil phosphoribosyltransferase">
    <location>
        <begin position="1"/>
        <end position="208"/>
    </location>
</feature>
<feature type="binding site" evidence="1">
    <location>
        <position position="78"/>
    </location>
    <ligand>
        <name>5-phospho-alpha-D-ribose 1-diphosphate</name>
        <dbReference type="ChEBI" id="CHEBI:58017"/>
    </ligand>
</feature>
<feature type="binding site" evidence="1">
    <location>
        <position position="103"/>
    </location>
    <ligand>
        <name>5-phospho-alpha-D-ribose 1-diphosphate</name>
        <dbReference type="ChEBI" id="CHEBI:58017"/>
    </ligand>
</feature>
<feature type="binding site" evidence="1">
    <location>
        <begin position="130"/>
        <end position="138"/>
    </location>
    <ligand>
        <name>5-phospho-alpha-D-ribose 1-diphosphate</name>
        <dbReference type="ChEBI" id="CHEBI:58017"/>
    </ligand>
</feature>
<feature type="binding site" evidence="1">
    <location>
        <position position="193"/>
    </location>
    <ligand>
        <name>uracil</name>
        <dbReference type="ChEBI" id="CHEBI:17568"/>
    </ligand>
</feature>
<feature type="binding site" evidence="1">
    <location>
        <begin position="198"/>
        <end position="200"/>
    </location>
    <ligand>
        <name>uracil</name>
        <dbReference type="ChEBI" id="CHEBI:17568"/>
    </ligand>
</feature>
<feature type="binding site" evidence="1">
    <location>
        <position position="199"/>
    </location>
    <ligand>
        <name>5-phospho-alpha-D-ribose 1-diphosphate</name>
        <dbReference type="ChEBI" id="CHEBI:58017"/>
    </ligand>
</feature>